<comment type="function">
    <text evidence="1">Removes the formyl group from the N-terminal Met of newly synthesized proteins. Requires at least a dipeptide for an efficient rate of reaction. N-terminal L-methionine is a prerequisite for activity but the enzyme has broad specificity at other positions.</text>
</comment>
<comment type="catalytic activity">
    <reaction evidence="1">
        <text>N-terminal N-formyl-L-methionyl-[peptide] + H2O = N-terminal L-methionyl-[peptide] + formate</text>
        <dbReference type="Rhea" id="RHEA:24420"/>
        <dbReference type="Rhea" id="RHEA-COMP:10639"/>
        <dbReference type="Rhea" id="RHEA-COMP:10640"/>
        <dbReference type="ChEBI" id="CHEBI:15377"/>
        <dbReference type="ChEBI" id="CHEBI:15740"/>
        <dbReference type="ChEBI" id="CHEBI:49298"/>
        <dbReference type="ChEBI" id="CHEBI:64731"/>
        <dbReference type="EC" id="3.5.1.88"/>
    </reaction>
</comment>
<comment type="cofactor">
    <cofactor evidence="1">
        <name>Fe(2+)</name>
        <dbReference type="ChEBI" id="CHEBI:29033"/>
    </cofactor>
    <text evidence="1">Binds 1 Fe(2+) ion.</text>
</comment>
<comment type="similarity">
    <text evidence="1">Belongs to the polypeptide deformylase family.</text>
</comment>
<reference key="1">
    <citation type="journal article" date="2006" name="PLoS Biol.">
        <title>Metabolic complementarity and genomics of the dual bacterial symbiosis of sharpshooters.</title>
        <authorList>
            <person name="Wu D."/>
            <person name="Daugherty S.C."/>
            <person name="Van Aken S.E."/>
            <person name="Pai G.H."/>
            <person name="Watkins K.L."/>
            <person name="Khouri H."/>
            <person name="Tallon L.J."/>
            <person name="Zaborsky J.M."/>
            <person name="Dunbar H.E."/>
            <person name="Tran P.L."/>
            <person name="Moran N.A."/>
            <person name="Eisen J.A."/>
        </authorList>
    </citation>
    <scope>NUCLEOTIDE SEQUENCE [LARGE SCALE GENOMIC DNA]</scope>
</reference>
<gene>
    <name evidence="1" type="primary">def</name>
    <name type="ordered locus">BCI_0416</name>
</gene>
<proteinExistence type="inferred from homology"/>
<name>DEF_BAUCH</name>
<accession>Q1LT56</accession>
<dbReference type="EC" id="3.5.1.88" evidence="1"/>
<dbReference type="EMBL" id="CP000238">
    <property type="protein sequence ID" value="ABF13812.1"/>
    <property type="molecule type" value="Genomic_DNA"/>
</dbReference>
<dbReference type="RefSeq" id="WP_011520591.1">
    <property type="nucleotide sequence ID" value="NC_007984.1"/>
</dbReference>
<dbReference type="SMR" id="Q1LT56"/>
<dbReference type="STRING" id="374463.BCI_0416"/>
<dbReference type="KEGG" id="bci:BCI_0416"/>
<dbReference type="HOGENOM" id="CLU_061901_2_1_6"/>
<dbReference type="OrthoDB" id="9804313at2"/>
<dbReference type="Proteomes" id="UP000002427">
    <property type="component" value="Chromosome"/>
</dbReference>
<dbReference type="GO" id="GO:0046872">
    <property type="term" value="F:metal ion binding"/>
    <property type="evidence" value="ECO:0007669"/>
    <property type="project" value="UniProtKB-KW"/>
</dbReference>
<dbReference type="GO" id="GO:0042586">
    <property type="term" value="F:peptide deformylase activity"/>
    <property type="evidence" value="ECO:0007669"/>
    <property type="project" value="UniProtKB-UniRule"/>
</dbReference>
<dbReference type="GO" id="GO:0043686">
    <property type="term" value="P:co-translational protein modification"/>
    <property type="evidence" value="ECO:0007669"/>
    <property type="project" value="TreeGrafter"/>
</dbReference>
<dbReference type="GO" id="GO:0006412">
    <property type="term" value="P:translation"/>
    <property type="evidence" value="ECO:0007669"/>
    <property type="project" value="UniProtKB-UniRule"/>
</dbReference>
<dbReference type="CDD" id="cd00487">
    <property type="entry name" value="Pep_deformylase"/>
    <property type="match status" value="1"/>
</dbReference>
<dbReference type="FunFam" id="3.90.45.10:FF:000001">
    <property type="entry name" value="Peptide deformylase"/>
    <property type="match status" value="1"/>
</dbReference>
<dbReference type="Gene3D" id="3.90.45.10">
    <property type="entry name" value="Peptide deformylase"/>
    <property type="match status" value="1"/>
</dbReference>
<dbReference type="HAMAP" id="MF_00163">
    <property type="entry name" value="Pep_deformylase"/>
    <property type="match status" value="1"/>
</dbReference>
<dbReference type="InterPro" id="IPR023635">
    <property type="entry name" value="Peptide_deformylase"/>
</dbReference>
<dbReference type="InterPro" id="IPR036821">
    <property type="entry name" value="Peptide_deformylase_sf"/>
</dbReference>
<dbReference type="NCBIfam" id="TIGR00079">
    <property type="entry name" value="pept_deformyl"/>
    <property type="match status" value="1"/>
</dbReference>
<dbReference type="NCBIfam" id="NF001159">
    <property type="entry name" value="PRK00150.1-3"/>
    <property type="match status" value="1"/>
</dbReference>
<dbReference type="PANTHER" id="PTHR10458">
    <property type="entry name" value="PEPTIDE DEFORMYLASE"/>
    <property type="match status" value="1"/>
</dbReference>
<dbReference type="PANTHER" id="PTHR10458:SF21">
    <property type="entry name" value="PEPTIDE DEFORMYLASE"/>
    <property type="match status" value="1"/>
</dbReference>
<dbReference type="Pfam" id="PF01327">
    <property type="entry name" value="Pep_deformylase"/>
    <property type="match status" value="1"/>
</dbReference>
<dbReference type="PIRSF" id="PIRSF004749">
    <property type="entry name" value="Pep_def"/>
    <property type="match status" value="1"/>
</dbReference>
<dbReference type="PRINTS" id="PR01576">
    <property type="entry name" value="PDEFORMYLASE"/>
</dbReference>
<dbReference type="SUPFAM" id="SSF56420">
    <property type="entry name" value="Peptide deformylase"/>
    <property type="match status" value="1"/>
</dbReference>
<protein>
    <recommendedName>
        <fullName evidence="1">Peptide deformylase</fullName>
        <shortName evidence="1">PDF</shortName>
        <ecNumber evidence="1">3.5.1.88</ecNumber>
    </recommendedName>
    <alternativeName>
        <fullName evidence="1">Polypeptide deformylase</fullName>
    </alternativeName>
</protein>
<organism>
    <name type="scientific">Baumannia cicadellinicola subsp. Homalodisca coagulata</name>
    <dbReference type="NCBI Taxonomy" id="374463"/>
    <lineage>
        <taxon>Bacteria</taxon>
        <taxon>Pseudomonadati</taxon>
        <taxon>Pseudomonadota</taxon>
        <taxon>Gammaproteobacteria</taxon>
        <taxon>Candidatus Palibaumannia</taxon>
    </lineage>
</organism>
<feature type="chain" id="PRO_0000301009" description="Peptide deformylase">
    <location>
        <begin position="1"/>
        <end position="167"/>
    </location>
</feature>
<feature type="active site" evidence="1">
    <location>
        <position position="134"/>
    </location>
</feature>
<feature type="binding site" evidence="1">
    <location>
        <position position="91"/>
    </location>
    <ligand>
        <name>Fe cation</name>
        <dbReference type="ChEBI" id="CHEBI:24875"/>
    </ligand>
</feature>
<feature type="binding site" evidence="1">
    <location>
        <position position="133"/>
    </location>
    <ligand>
        <name>Fe cation</name>
        <dbReference type="ChEBI" id="CHEBI:24875"/>
    </ligand>
</feature>
<feature type="binding site" evidence="1">
    <location>
        <position position="137"/>
    </location>
    <ligand>
        <name>Fe cation</name>
        <dbReference type="ChEBI" id="CHEBI:24875"/>
    </ligand>
</feature>
<keyword id="KW-0378">Hydrolase</keyword>
<keyword id="KW-0408">Iron</keyword>
<keyword id="KW-0479">Metal-binding</keyword>
<keyword id="KW-0648">Protein biosynthesis</keyword>
<keyword id="KW-1185">Reference proteome</keyword>
<sequence length="167" mass="19211">MSLLPILYYPDHRLRQISKPVNKINNSIYRIVYDMFDTMYHKNGIGLAAPQVNINLNIIVIDVSENKEQRLVLINPELLAKSGETGIHEGCLSIPEQHGFVPRAKNIKVRALDLNGNSFNLETNDLQAICIQHEMDHLVGKLFIDYLSPLKRQRLLKKMKQLIRNLD</sequence>
<evidence type="ECO:0000255" key="1">
    <source>
        <dbReference type="HAMAP-Rule" id="MF_00163"/>
    </source>
</evidence>